<proteinExistence type="inferred from homology"/>
<comment type="function">
    <text evidence="1">Bifunctional serine/threonine kinase and phosphorylase involved in the regulation of the pyruvate, phosphate dikinase (PPDK) by catalyzing its phosphorylation/dephosphorylation.</text>
</comment>
<comment type="catalytic activity">
    <reaction evidence="1">
        <text>N(tele)-phospho-L-histidyl/L-threonyl-[pyruvate, phosphate dikinase] + ADP = N(tele)-phospho-L-histidyl/O-phospho-L-threonyl-[pyruvate, phosphate dikinase] + AMP + H(+)</text>
        <dbReference type="Rhea" id="RHEA:43692"/>
        <dbReference type="Rhea" id="RHEA-COMP:10650"/>
        <dbReference type="Rhea" id="RHEA-COMP:10651"/>
        <dbReference type="ChEBI" id="CHEBI:15378"/>
        <dbReference type="ChEBI" id="CHEBI:30013"/>
        <dbReference type="ChEBI" id="CHEBI:61977"/>
        <dbReference type="ChEBI" id="CHEBI:83586"/>
        <dbReference type="ChEBI" id="CHEBI:456215"/>
        <dbReference type="ChEBI" id="CHEBI:456216"/>
        <dbReference type="EC" id="2.7.11.32"/>
    </reaction>
</comment>
<comment type="catalytic activity">
    <reaction evidence="1">
        <text>N(tele)-phospho-L-histidyl/O-phospho-L-threonyl-[pyruvate, phosphate dikinase] + phosphate + H(+) = N(tele)-phospho-L-histidyl/L-threonyl-[pyruvate, phosphate dikinase] + diphosphate</text>
        <dbReference type="Rhea" id="RHEA:43696"/>
        <dbReference type="Rhea" id="RHEA-COMP:10650"/>
        <dbReference type="Rhea" id="RHEA-COMP:10651"/>
        <dbReference type="ChEBI" id="CHEBI:15378"/>
        <dbReference type="ChEBI" id="CHEBI:30013"/>
        <dbReference type="ChEBI" id="CHEBI:33019"/>
        <dbReference type="ChEBI" id="CHEBI:43474"/>
        <dbReference type="ChEBI" id="CHEBI:61977"/>
        <dbReference type="ChEBI" id="CHEBI:83586"/>
        <dbReference type="EC" id="2.7.4.27"/>
    </reaction>
</comment>
<comment type="similarity">
    <text evidence="1">Belongs to the pyruvate, phosphate/water dikinase regulatory protein family. PDRP subfamily.</text>
</comment>
<name>PDRP_STRA1</name>
<protein>
    <recommendedName>
        <fullName evidence="1">Putative pyruvate, phosphate dikinase regulatory protein</fullName>
        <shortName evidence="1">PPDK regulatory protein</shortName>
        <ecNumber evidence="1">2.7.11.32</ecNumber>
        <ecNumber evidence="1">2.7.4.27</ecNumber>
    </recommendedName>
</protein>
<gene>
    <name type="ordered locus">SAK_1683</name>
</gene>
<reference key="1">
    <citation type="journal article" date="2005" name="Proc. Natl. Acad. Sci. U.S.A.">
        <title>Genome analysis of multiple pathogenic isolates of Streptococcus agalactiae: implications for the microbial 'pan-genome'.</title>
        <authorList>
            <person name="Tettelin H."/>
            <person name="Masignani V."/>
            <person name="Cieslewicz M.J."/>
            <person name="Donati C."/>
            <person name="Medini D."/>
            <person name="Ward N.L."/>
            <person name="Angiuoli S.V."/>
            <person name="Crabtree J."/>
            <person name="Jones A.L."/>
            <person name="Durkin A.S."/>
            <person name="DeBoy R.T."/>
            <person name="Davidsen T.M."/>
            <person name="Mora M."/>
            <person name="Scarselli M."/>
            <person name="Margarit y Ros I."/>
            <person name="Peterson J.D."/>
            <person name="Hauser C.R."/>
            <person name="Sundaram J.P."/>
            <person name="Nelson W.C."/>
            <person name="Madupu R."/>
            <person name="Brinkac L.M."/>
            <person name="Dodson R.J."/>
            <person name="Rosovitz M.J."/>
            <person name="Sullivan S.A."/>
            <person name="Daugherty S.C."/>
            <person name="Haft D.H."/>
            <person name="Selengut J."/>
            <person name="Gwinn M.L."/>
            <person name="Zhou L."/>
            <person name="Zafar N."/>
            <person name="Khouri H."/>
            <person name="Radune D."/>
            <person name="Dimitrov G."/>
            <person name="Watkins K."/>
            <person name="O'Connor K.J."/>
            <person name="Smith S."/>
            <person name="Utterback T.R."/>
            <person name="White O."/>
            <person name="Rubens C.E."/>
            <person name="Grandi G."/>
            <person name="Madoff L.C."/>
            <person name="Kasper D.L."/>
            <person name="Telford J.L."/>
            <person name="Wessels M.R."/>
            <person name="Rappuoli R."/>
            <person name="Fraser C.M."/>
        </authorList>
    </citation>
    <scope>NUCLEOTIDE SEQUENCE [LARGE SCALE GENOMIC DNA]</scope>
    <source>
        <strain>ATCC 27591 / A909 / CDC SS700</strain>
    </source>
</reference>
<evidence type="ECO:0000255" key="1">
    <source>
        <dbReference type="HAMAP-Rule" id="MF_00921"/>
    </source>
</evidence>
<accession>Q3JZL8</accession>
<feature type="chain" id="PRO_0000196729" description="Putative pyruvate, phosphate dikinase regulatory protein">
    <location>
        <begin position="1"/>
        <end position="276"/>
    </location>
</feature>
<feature type="binding site" evidence="1">
    <location>
        <begin position="151"/>
        <end position="158"/>
    </location>
    <ligand>
        <name>ADP</name>
        <dbReference type="ChEBI" id="CHEBI:456216"/>
    </ligand>
</feature>
<sequence>MEDQLTIFIISDSLGETAKAIAKACLSQFPGHDDWHFQRFSYINSQERLEQVFEEASQKTVFMMFSLVDVALASYAQKRCESEHYAYVDLLTNVIQGISRISGIDPLGEPGILRRLDNDYFKRVESIEFAVKYDDGRDPRGILQADLVIIGISRTSKTPLSMFLADKNIKVINIPLVPEVPVPKELRMIDSRRIIGLTNSVDHLNQVRKVRLKSLGLSSTANYASLERILEETRYAEEVMKNLGCPIINVSDKAIEETATIILEILKTNGQVAKNL</sequence>
<keyword id="KW-0418">Kinase</keyword>
<keyword id="KW-0547">Nucleotide-binding</keyword>
<keyword id="KW-0723">Serine/threonine-protein kinase</keyword>
<keyword id="KW-0808">Transferase</keyword>
<organism>
    <name type="scientific">Streptococcus agalactiae serotype Ia (strain ATCC 27591 / A909 / CDC SS700)</name>
    <dbReference type="NCBI Taxonomy" id="205921"/>
    <lineage>
        <taxon>Bacteria</taxon>
        <taxon>Bacillati</taxon>
        <taxon>Bacillota</taxon>
        <taxon>Bacilli</taxon>
        <taxon>Lactobacillales</taxon>
        <taxon>Streptococcaceae</taxon>
        <taxon>Streptococcus</taxon>
    </lineage>
</organism>
<dbReference type="EC" id="2.7.11.32" evidence="1"/>
<dbReference type="EC" id="2.7.4.27" evidence="1"/>
<dbReference type="EMBL" id="CP000114">
    <property type="protein sequence ID" value="ABA44541.1"/>
    <property type="molecule type" value="Genomic_DNA"/>
</dbReference>
<dbReference type="RefSeq" id="WP_000390093.1">
    <property type="nucleotide sequence ID" value="NC_007432.1"/>
</dbReference>
<dbReference type="SMR" id="Q3JZL8"/>
<dbReference type="KEGG" id="sak:SAK_1683"/>
<dbReference type="HOGENOM" id="CLU_046206_2_1_9"/>
<dbReference type="GO" id="GO:0043531">
    <property type="term" value="F:ADP binding"/>
    <property type="evidence" value="ECO:0007669"/>
    <property type="project" value="UniProtKB-UniRule"/>
</dbReference>
<dbReference type="GO" id="GO:0005524">
    <property type="term" value="F:ATP binding"/>
    <property type="evidence" value="ECO:0007669"/>
    <property type="project" value="InterPro"/>
</dbReference>
<dbReference type="GO" id="GO:0016776">
    <property type="term" value="F:phosphotransferase activity, phosphate group as acceptor"/>
    <property type="evidence" value="ECO:0007669"/>
    <property type="project" value="UniProtKB-UniRule"/>
</dbReference>
<dbReference type="GO" id="GO:0004674">
    <property type="term" value="F:protein serine/threonine kinase activity"/>
    <property type="evidence" value="ECO:0007669"/>
    <property type="project" value="UniProtKB-UniRule"/>
</dbReference>
<dbReference type="HAMAP" id="MF_00921">
    <property type="entry name" value="PDRP"/>
    <property type="match status" value="1"/>
</dbReference>
<dbReference type="InterPro" id="IPR005177">
    <property type="entry name" value="Kinase-pyrophosphorylase"/>
</dbReference>
<dbReference type="InterPro" id="IPR026565">
    <property type="entry name" value="PPDK_reg"/>
</dbReference>
<dbReference type="NCBIfam" id="NF003742">
    <property type="entry name" value="PRK05339.1"/>
    <property type="match status" value="1"/>
</dbReference>
<dbReference type="PANTHER" id="PTHR31756">
    <property type="entry name" value="PYRUVATE, PHOSPHATE DIKINASE REGULATORY PROTEIN 1, CHLOROPLASTIC"/>
    <property type="match status" value="1"/>
</dbReference>
<dbReference type="PANTHER" id="PTHR31756:SF3">
    <property type="entry name" value="PYRUVATE, PHOSPHATE DIKINASE REGULATORY PROTEIN 1, CHLOROPLASTIC"/>
    <property type="match status" value="1"/>
</dbReference>
<dbReference type="Pfam" id="PF03618">
    <property type="entry name" value="Kinase-PPPase"/>
    <property type="match status" value="1"/>
</dbReference>